<keyword id="KW-0027">Amidation</keyword>
<keyword id="KW-0903">Direct protein sequencing</keyword>
<keyword id="KW-0372">Hormone</keyword>
<keyword id="KW-0527">Neuropeptide</keyword>
<keyword id="KW-0964">Secreted</keyword>
<keyword id="KW-0765">Sulfation</keyword>
<feature type="peptide" id="PRO_0000378860" description="Sulfakinin-1" evidence="3">
    <location>
        <begin position="1"/>
        <end position="11"/>
    </location>
</feature>
<feature type="modified residue" description="Sulfotyrosine" evidence="1">
    <location>
        <position position="6"/>
    </location>
</feature>
<feature type="modified residue" description="Phenylalanine amide" evidence="3">
    <location>
        <position position="11"/>
    </location>
</feature>
<evidence type="ECO:0000250" key="1">
    <source>
        <dbReference type="UniProtKB" id="P41493"/>
    </source>
</evidence>
<evidence type="ECO:0000255" key="2"/>
<evidence type="ECO:0000269" key="3">
    <source>
    </source>
</evidence>
<evidence type="ECO:0000303" key="4">
    <source>
    </source>
</evidence>
<evidence type="ECO:0000305" key="5"/>
<reference evidence="5" key="1">
    <citation type="journal article" date="2009" name="BMC Evol. Biol.">
        <title>A proteomic approach for studying insect phylogeny: CAPA peptides of ancient insect taxa (Dictyoptera, Blattoptera) as a test case.</title>
        <authorList>
            <person name="Roth S."/>
            <person name="Fromm B."/>
            <person name="Gaede G."/>
            <person name="Predel R."/>
        </authorList>
    </citation>
    <scope>PROTEIN SEQUENCE</scope>
    <scope>AMIDATION AT PHE-11</scope>
    <source>
        <tissue evidence="3">Corpora cardiaca</tissue>
    </source>
</reference>
<dbReference type="GO" id="GO:0005576">
    <property type="term" value="C:extracellular region"/>
    <property type="evidence" value="ECO:0007669"/>
    <property type="project" value="UniProtKB-SubCell"/>
</dbReference>
<dbReference type="GO" id="GO:0005179">
    <property type="term" value="F:hormone activity"/>
    <property type="evidence" value="ECO:0007669"/>
    <property type="project" value="UniProtKB-KW"/>
</dbReference>
<dbReference type="GO" id="GO:0007218">
    <property type="term" value="P:neuropeptide signaling pathway"/>
    <property type="evidence" value="ECO:0007669"/>
    <property type="project" value="UniProtKB-KW"/>
</dbReference>
<dbReference type="InterPro" id="IPR013152">
    <property type="entry name" value="Gastrin/cholecystokinin_CS"/>
</dbReference>
<dbReference type="InterPro" id="IPR013259">
    <property type="entry name" value="Sulfakinin"/>
</dbReference>
<dbReference type="Pfam" id="PF08257">
    <property type="entry name" value="Sulfakinin"/>
    <property type="match status" value="1"/>
</dbReference>
<dbReference type="PROSITE" id="PS00259">
    <property type="entry name" value="GASTRIN"/>
    <property type="match status" value="1"/>
</dbReference>
<protein>
    <recommendedName>
        <fullName evidence="4">Sulfakinin-1</fullName>
        <shortName evidence="4">BanRo-SK-1</shortName>
    </recommendedName>
</protein>
<name>SK1_BANRO</name>
<sequence>EQFEDYGHMRF</sequence>
<proteinExistence type="evidence at protein level"/>
<accession>P85544</accession>
<organism>
    <name type="scientific">Bantua robusta</name>
    <name type="common">African bullet roach</name>
    <dbReference type="NCBI Taxonomy" id="344686"/>
    <lineage>
        <taxon>Eukaryota</taxon>
        <taxon>Metazoa</taxon>
        <taxon>Ecdysozoa</taxon>
        <taxon>Arthropoda</taxon>
        <taxon>Hexapoda</taxon>
        <taxon>Insecta</taxon>
        <taxon>Pterygota</taxon>
        <taxon>Neoptera</taxon>
        <taxon>Polyneoptera</taxon>
        <taxon>Dictyoptera</taxon>
        <taxon>Blattodea</taxon>
        <taxon>Blaberoidea</taxon>
        <taxon>Blaberidae</taxon>
        <taxon>Perisphaerinae</taxon>
        <taxon>Bantua</taxon>
    </lineage>
</organism>
<comment type="function">
    <text evidence="1">Myotropic peptide.</text>
</comment>
<comment type="subcellular location">
    <subcellularLocation>
        <location evidence="5">Secreted</location>
    </subcellularLocation>
</comment>
<comment type="similarity">
    <text evidence="2">Belongs to the gastrin/cholecystokinin family.</text>
</comment>